<gene>
    <name type="primary">A1BG</name>
</gene>
<reference key="1">
    <citation type="journal article" date="1991" name="Comp. Biochem. Physiol.">
        <title>Donkey and horse alpha 1 B-glycoprotein: partial characterization and new alleles.</title>
        <authorList>
            <person name="Patterson S.D."/>
            <person name="Bell K."/>
            <person name="Shaw D.C."/>
        </authorList>
    </citation>
    <scope>PROTEIN SEQUENCE</scope>
    <source>
        <tissue>Plasma</tissue>
    </source>
</reference>
<comment type="subunit">
    <text evidence="1">Interacts with CRISP3.</text>
</comment>
<comment type="subcellular location">
    <subcellularLocation>
        <location>Secreted</location>
    </subcellularLocation>
</comment>
<comment type="tissue specificity">
    <text>Plasma.</text>
</comment>
<comment type="PTM">
    <text evidence="3">Glycosylated.</text>
</comment>
<protein>
    <recommendedName>
        <fullName>Alpha-1B-glycoprotein</fullName>
    </recommendedName>
    <alternativeName>
        <fullName>Alpha-1-B glycoprotein</fullName>
    </alternativeName>
    <alternativeName>
        <fullName>Postalbumin</fullName>
    </alternativeName>
</protein>
<sequence length="20" mass="2197">AVVFDPQPALWAEADTQLEP</sequence>
<name>A1BG_EQUAS</name>
<keyword id="KW-0903">Direct protein sequencing</keyword>
<keyword id="KW-0325">Glycoprotein</keyword>
<keyword id="KW-0393">Immunoglobulin domain</keyword>
<keyword id="KW-1185">Reference proteome</keyword>
<keyword id="KW-0964">Secreted</keyword>
<proteinExistence type="evidence at protein level"/>
<accession>P39090</accession>
<organism>
    <name type="scientific">Equus asinus</name>
    <name type="common">Donkey</name>
    <name type="synonym">Equus africanus asinus</name>
    <dbReference type="NCBI Taxonomy" id="9793"/>
    <lineage>
        <taxon>Eukaryota</taxon>
        <taxon>Metazoa</taxon>
        <taxon>Chordata</taxon>
        <taxon>Craniata</taxon>
        <taxon>Vertebrata</taxon>
        <taxon>Euteleostomi</taxon>
        <taxon>Mammalia</taxon>
        <taxon>Eutheria</taxon>
        <taxon>Laurasiatheria</taxon>
        <taxon>Perissodactyla</taxon>
        <taxon>Equidae</taxon>
        <taxon>Equus</taxon>
    </lineage>
</organism>
<evidence type="ECO:0000250" key="1"/>
<evidence type="ECO:0000256" key="2">
    <source>
        <dbReference type="SAM" id="MobiDB-lite"/>
    </source>
</evidence>
<evidence type="ECO:0000305" key="3"/>
<dbReference type="Proteomes" id="UP000694387">
    <property type="component" value="Unplaced"/>
</dbReference>
<dbReference type="GO" id="GO:0005576">
    <property type="term" value="C:extracellular region"/>
    <property type="evidence" value="ECO:0007669"/>
    <property type="project" value="UniProtKB-SubCell"/>
</dbReference>
<feature type="chain" id="PRO_0000072663" description="Alpha-1B-glycoprotein">
    <location>
        <begin position="1"/>
        <end position="20" status="greater than"/>
    </location>
</feature>
<feature type="region of interest" description="Disordered" evidence="2">
    <location>
        <begin position="1"/>
        <end position="20"/>
    </location>
</feature>
<feature type="non-terminal residue">
    <location>
        <position position="20"/>
    </location>
</feature>